<keyword id="KW-0034">Amyloid</keyword>
<keyword id="KW-0053">Apoptosis</keyword>
<keyword id="KW-0130">Cell adhesion</keyword>
<keyword id="KW-1003">Cell membrane</keyword>
<keyword id="KW-0966">Cell projection</keyword>
<keyword id="KW-0168">Coated pit</keyword>
<keyword id="KW-0186">Copper</keyword>
<keyword id="KW-0963">Cytoplasm</keyword>
<keyword id="KW-0968">Cytoplasmic vesicle</keyword>
<keyword id="KW-1015">Disulfide bond</keyword>
<keyword id="KW-0254">Endocytosis</keyword>
<keyword id="KW-0256">Endoplasmic reticulum</keyword>
<keyword id="KW-0967">Endosome</keyword>
<keyword id="KW-0325">Glycoprotein</keyword>
<keyword id="KW-0333">Golgi apparatus</keyword>
<keyword id="KW-0358">Heparin-binding</keyword>
<keyword id="KW-0408">Iron</keyword>
<keyword id="KW-1017">Isopeptide bond</keyword>
<keyword id="KW-0472">Membrane</keyword>
<keyword id="KW-0479">Metal-binding</keyword>
<keyword id="KW-0914">Notch signaling pathway</keyword>
<keyword id="KW-0539">Nucleus</keyword>
<keyword id="KW-0597">Phosphoprotein</keyword>
<keyword id="KW-0646">Protease inhibitor</keyword>
<keyword id="KW-1185">Reference proteome</keyword>
<keyword id="KW-0964">Secreted</keyword>
<keyword id="KW-0722">Serine protease inhibitor</keyword>
<keyword id="KW-0732">Signal</keyword>
<keyword id="KW-0765">Sulfation</keyword>
<keyword id="KW-0812">Transmembrane</keyword>
<keyword id="KW-1133">Transmembrane helix</keyword>
<keyword id="KW-0832">Ubl conjugation</keyword>
<keyword id="KW-0862">Zinc</keyword>
<comment type="function">
    <text evidence="1 2">Functions as a cell surface receptor and performs physiological functions on the surface of neurons relevant to neurite growth, neuronal adhesion and axonogenesis. Interaction between APP molecules on neighboring cells promotes synaptogenesis. Involved in cell mobility and transcription regulation through protein-protein interactions (By similarity). Can promote transcription activation through binding to APBB1-KAT5 and inhibit Notch signaling through interaction with Numb (By similarity). Couples to apoptosis-inducing pathways such as those mediated by G(o) and JIP (By similarity). Inhibits G(o)-alpha ATPase activity (By similarity). Acts as a kinesin I membrane receptor, mediating the axonal transport of beta-secretase and presenilin 1 (By similarity). By acting as a kinesin I membrane receptor, plays a role in axonal anterograde transport of cargo towards synapses in axons (By similarity). May be involved in copper homeostasis/oxidative stress through copper ion reduction (By similarity). In vitro, copper-metallated APP induces neuronal death directly or is potentiated through Cu(2+)-mediated low-density lipoprotein oxidation (By similarity). Can regulate neurite outgrowth through binding to components of the extracellular matrix such as heparin and collagen I and IV. Induces a AGER-dependent pathway that involves activation of p38 MAPK, resulting in internalization of amyloid-beta peptide and mitochondrial dysfunction in cultured cortical neurons. Provides Cu(2+) ions for GPC1 which are required for release of nitric oxide (NO) and subsequent degradation of the heparan sulfate chains on GPC1 (By similarity).</text>
</comment>
<comment type="function">
    <text evidence="1">Amyloid-beta peptides are lipophilic metal chelators with metal-reducing activity. Binds transient metals such as copper, zinc and iron (By similarity).</text>
</comment>
<comment type="function">
    <text evidence="1">The gamma-CTF peptides as well as the caspase-cleaved peptides, including C31, are potent enhancers of neuronal apoptosis.</text>
</comment>
<comment type="subunit">
    <text evidence="2 3 4">Binds, via its C-terminus, to the PID domain of several cytoplasmic proteins, including APBB family members, the APBA family, MAPK8IP1, SHC1 and NUMB and DAB1 (By similarity). Binding to DAB1 inhibits its serine phosphorylation (By similarity). Interacts (via NPXY motif) with DAB2 (via PID domain); the interaction is impaired by tyrosine phosphorylation of the NPXY motif. Also interacts with GPCR-like protein BPP, APPBP1, IB1, KNS2 (via its TPR domains), APPBP2 (via BaSS) and DDB1. In vitro, it binds MAPT via the MT-binding domains (By similarity). Associates with microtubules in the presence of ATP and in a kinesin-dependent manner (By similarity). Interacts, through a C-terminal domain, with GNAO1. Amyloid-beta protein 42 binds CHRNA7 in hippocampal neurons (By similarity). Amyloid-beta associates with HADH2 (By similarity). Interacts with CPEB1, ANKS1B and AGER (By similarity). Interacts with ITM2B. Interacts with ITM2C. Interacts with IDE. Can form homodimers; dimerization is enhanced in the presence of Cu(2+) ions. Can form homodimers; this is promoted by heparin binding (By similarity). Amyloid-beta protein 40 interacts with S100A9 (By similarity). CTF-alpha product of APP interacts with GSAP (By similarity). Interacts with SORL1 (via N-terminal ectodomain); this interaction retains APP in the trans-Golgi network and reduces processing into soluble APP-alpha and amyloid-beta peptides (By similarity). The C99 fragment also interacts with SORL1 (By similarity). Interacts with PLD3 (By similarity). Interacts with VDAC1 (By similarity). Interacts with NSG1; could regulate APP processing (By similarity). Amyloid-beta protein 42 interacts with FPR2 (By similarity). Interacts (via transmembrane region) with PSEN1; the interaction is direct (By similarity). Interacts with LRRK2 (By similarity). Interacts (via cytoplasmic domain) with KIF5B (By similarity). Interacts (via C-terminus) with APBB2/FE65L1 (via C-terminus) (By similarity). Interacts (via intracellular domain) with APBB3 (By similarity).</text>
</comment>
<comment type="subcellular location">
    <subcellularLocation>
        <location evidence="2">Cell membrane</location>
        <topology evidence="2">Single-pass type I membrane protein</topology>
    </subcellularLocation>
    <subcellularLocation>
        <location evidence="2">Membrane</location>
        <topology evidence="2">Single-pass type I membrane protein</topology>
    </subcellularLocation>
    <subcellularLocation>
        <location evidence="2">Perikaryon</location>
    </subcellularLocation>
    <subcellularLocation>
        <location evidence="2">Cell projection</location>
        <location evidence="2">Growth cone</location>
    </subcellularLocation>
    <subcellularLocation>
        <location evidence="2">Membrane</location>
        <location evidence="2">Clathrin-coated pit</location>
    </subcellularLocation>
    <subcellularLocation>
        <location evidence="2">Early endosome</location>
    </subcellularLocation>
    <subcellularLocation>
        <location evidence="2">Cytoplasmic vesicle</location>
    </subcellularLocation>
    <text evidence="2">Cell surface protein that rapidly becomes internalized via clathrin-coated pits. Only a minor proportion is present at the cell membrane; most of the protein is present in intracellular vesicles. During maturation, the immature APP (N-glycosylated in the endoplasmic reticulum) moves to the Golgi complex where complete maturation occurs (O-glycosylated and sulfated). After alpha-secretase cleavage, soluble APP is released into the extracellular space and the C-terminal is internalized to endosomes and lysosomes. Some APP accumulates in secretory transport vesicles leaving the late Golgi compartment and returns to the cell surface. APP sorts to the basolateral surface in epithelial cells. During neuronal differentiation, the Thr-743 phosphorylated form is located mainly in growth cones, moderately in neurites and sparingly in the cell body. Casein kinase phosphorylation can occur either at the cell surface or within a post-Golgi compartment. Associates with GPC1 in perinuclear compartments. Colocalizes with SORL1 in a vesicular pattern in cytoplasm and perinuclear regions.</text>
</comment>
<comment type="subcellular location">
    <molecule>C83</molecule>
    <subcellularLocation>
        <location evidence="2">Endoplasmic reticulum</location>
    </subcellularLocation>
    <subcellularLocation>
        <location evidence="2">Golgi apparatus</location>
    </subcellularLocation>
    <subcellularLocation>
        <location evidence="2">Early endosome</location>
    </subcellularLocation>
</comment>
<comment type="subcellular location">
    <molecule>C99</molecule>
    <subcellularLocation>
        <location evidence="2">Early endosome</location>
    </subcellularLocation>
</comment>
<comment type="subcellular location">
    <molecule>Soluble APP-beta</molecule>
    <subcellularLocation>
        <location evidence="2">Secreted</location>
    </subcellularLocation>
</comment>
<comment type="subcellular location">
    <molecule>Amyloid-beta protein 42</molecule>
    <subcellularLocation>
        <location evidence="2">Cell surface</location>
    </subcellularLocation>
    <text evidence="2">Associates with FPR2 at the cell surface and the complex is then rapidly internalized.</text>
</comment>
<comment type="subcellular location">
    <molecule>Gamma-secretase C-terminal fragment 59</molecule>
    <subcellularLocation>
        <location evidence="2">Nucleus</location>
    </subcellularLocation>
    <subcellularLocation>
        <location evidence="2">Cytoplasm</location>
    </subcellularLocation>
    <text evidence="2 4">Located to both the cytoplasm and nuclei of neurons. It can be translocated to the nucleus through association with APBB1 (Fe65). In dopaminergic neurons, the phosphorylated Thr-743 form is localized to the nucleus (By similarity).</text>
</comment>
<comment type="domain">
    <text evidence="2">The transmembrane helix undergoes a conformation change and unravels partially when bound to PSEN1, facilitating cleavage by PSEN1.</text>
</comment>
<comment type="domain">
    <text evidence="2">The basolateral sorting signal (BaSS) is required for sorting of membrane proteins to the basolateral surface of epithelial cells.</text>
</comment>
<comment type="domain">
    <text evidence="2">The GFLD subdomain binds Cu(2+) ions; this promotes homodimerization.</text>
</comment>
<comment type="domain">
    <text evidence="2">The NPXY sequence motif found in many tyrosine-phosphorylated proteins is required for the specific binding of the PID domain. However, additional amino acids either N- or C-terminal to the NPXY motif are often required for complete interaction. The PID domain-containing proteins which bind APP require the YENPTY motif for full interaction. These interactions are independent of phosphorylation on the terminal tyrosine residue. The YENPXY site is also involved in clathrin-mediated endocytosis.</text>
</comment>
<comment type="domain">
    <text evidence="2">The C-terminal region can bind zinc ions; this favors dimerization and formation of higher oligomers.</text>
</comment>
<comment type="domain">
    <text evidence="2">The OX-2 motif shows some similarity to a region in the N-terminus of CD200/MOX2.</text>
</comment>
<comment type="PTM">
    <text evidence="2">Proteolytically processed under normal cellular conditions. Cleavage either by alpha-secretase, beta-secretase or theta-secretase leads to generation and extracellular release of soluble APP peptides, S-APP-alpha and S-APP-beta, and the retention of corresponding membrane-anchored C-terminal fragments, C80, C83 and C99. Subsequent processing of C80 and C83 by gamma-secretase yields P3 peptides. This is the major secretory pathway and is non-amyloidogenic. Alternatively, presenilin/nicastrin-mediated gamma-secretase processing of C99 releases the amyloid-beta proteins, amyloid-beta protein 40 and amyloid-beta protein 42, major components of amyloid plaques, and the cytotoxic C-terminal fragments, gamma-CTF(50), gamma-CTF(57) and gamma-CTF(59). PSEN1 cleavage is more efficient with C83 than with C99 as substrate (in vitro). Amyloid-beta protein 40 and Amyloid-beta protein 42 are cleaved by ACE. Many other minor amyloid-beta peptides, amyloid-beta 1-X peptides, are found in cerebral spinal fluid (CSF) including the amyloid-beta X-15 peptides, produced from the cleavage by alpha-secretase.</text>
</comment>
<comment type="PTM">
    <text evidence="1">Proteolytically cleaved by caspases during neuronal apoptosis. Cleavage at Asp-739 by either caspase-3, -8 or -9 results in the production of the neurotoxic C31 peptide and the increased production of amyloid-beta peptides.</text>
</comment>
<comment type="PTM">
    <text evidence="1">N- and O-glycosylated.</text>
</comment>
<comment type="PTM">
    <text evidence="2">Phosphorylation in the C-terminal on tyrosine, threonine and serine residues is neuron-specific. Phosphorylation can affect APP processing, neuronal differentiation and interaction with other proteins. Phosphorylated on Thr-743 in neuronal cells by Cdc5 kinase and Mapk10, in dividing cells by Cdc2 kinase in a cell-cycle dependent manner with maximal levels at the G2/M phase and, in vitro, by GSK-3-beta. The Thr-743 phosphorylated form causes a conformational change which reduces binding of Fe65 family members. In dopaminergic (DA) neurons, phosphorylation on Thr-743 by LRKK2 promotes the production and the nuclear translocation of the APP intracellular domain (AICD) which induces DA neuron apoptosis. Phosphorylation on Tyr-757 is required for SHC binding. Phosphorylated in the extracellular domain by casein kinases on both soluble and membrane-bound APP. This phosphorylation is inhibited by heparin.</text>
</comment>
<comment type="PTM">
    <text evidence="1">Extracellular binding and reduction of copper, results in a corresponding oxidation of Cys-144 and Cys-158, and the formation of a disulfide bond.</text>
</comment>
<comment type="PTM">
    <text evidence="1">Trophic-factor deprivation triggers the cleavage of surface APP by beta-secretase to release sAPP-beta which is further cleaved to release an N-terminal fragment of APP (N-APP).</text>
</comment>
<comment type="PTM">
    <text evidence="4">Amyloid-beta peptides are degraded by IDE.</text>
</comment>
<comment type="PTM">
    <text evidence="2">Sulfated on tyrosine residues.</text>
</comment>
<comment type="miscellaneous">
    <text evidence="2">Chelation of metal ions, notably copper, iron and zinc, can induce histidine-bridging between amyloid-beta molecules resulting in amyloid-beta-metal aggregates. Extracellular zinc-binding increases binding of heparin to APP and inhibits collagen-binding.</text>
</comment>
<comment type="similarity">
    <text evidence="7">Belongs to the APP family.</text>
</comment>
<dbReference type="EMBL" id="AB032550">
    <property type="protein sequence ID" value="BAA84580.1"/>
    <property type="molecule type" value="mRNA"/>
</dbReference>
<dbReference type="EMBL" id="Z84022">
    <property type="protein sequence ID" value="CAB06313.1"/>
    <property type="molecule type" value="mRNA"/>
</dbReference>
<dbReference type="EMBL" id="X56127">
    <property type="protein sequence ID" value="CAA39592.1"/>
    <property type="molecule type" value="mRNA"/>
</dbReference>
<dbReference type="PIR" id="F60045">
    <property type="entry name" value="F60045"/>
</dbReference>
<dbReference type="RefSeq" id="NP_999537.1">
    <property type="nucleotide sequence ID" value="NM_214372.1"/>
</dbReference>
<dbReference type="BMRB" id="P79307"/>
<dbReference type="SMR" id="P79307"/>
<dbReference type="FunCoup" id="P79307">
    <property type="interactions" value="862"/>
</dbReference>
<dbReference type="STRING" id="9823.ENSSSCP00000012805"/>
<dbReference type="MEROPS" id="I02.015"/>
<dbReference type="GlyCosmos" id="P79307">
    <property type="glycosylation" value="2 sites, No reported glycans"/>
</dbReference>
<dbReference type="GlyGen" id="P79307">
    <property type="glycosylation" value="2 sites"/>
</dbReference>
<dbReference type="PaxDb" id="9823-ENSSSCP00000012805"/>
<dbReference type="PeptideAtlas" id="P79307"/>
<dbReference type="Ensembl" id="ENSSSCT00030028871.1">
    <property type="protein sequence ID" value="ENSSSCP00030012910.1"/>
    <property type="gene ID" value="ENSSSCG00030020728.1"/>
</dbReference>
<dbReference type="Ensembl" id="ENSSSCT00035060331.1">
    <property type="protein sequence ID" value="ENSSSCP00035024262.1"/>
    <property type="gene ID" value="ENSSSCG00035045193.1"/>
</dbReference>
<dbReference type="Ensembl" id="ENSSSCT00050091765.1">
    <property type="protein sequence ID" value="ENSSSCP00050039531.1"/>
    <property type="gene ID" value="ENSSSCG00050067128.1"/>
</dbReference>
<dbReference type="Ensembl" id="ENSSSCT00055024480.1">
    <property type="protein sequence ID" value="ENSSSCP00055019431.1"/>
    <property type="gene ID" value="ENSSSCG00055010466.1"/>
</dbReference>
<dbReference type="Ensembl" id="ENSSSCT00065019216.1">
    <property type="protein sequence ID" value="ENSSSCP00065007863.1"/>
    <property type="gene ID" value="ENSSSCG00065014377.1"/>
</dbReference>
<dbReference type="Ensembl" id="ENSSSCT00070031866.1">
    <property type="protein sequence ID" value="ENSSSCP00070026566.1"/>
    <property type="gene ID" value="ENSSSCG00070016103.1"/>
</dbReference>
<dbReference type="Ensembl" id="ENSSSCT00105032942">
    <property type="protein sequence ID" value="ENSSSCP00105023037"/>
    <property type="gene ID" value="ENSSSCG00105016899"/>
</dbReference>
<dbReference type="GeneID" id="397663"/>
<dbReference type="KEGG" id="ssc:397663"/>
<dbReference type="CTD" id="351"/>
<dbReference type="eggNOG" id="KOG3540">
    <property type="taxonomic scope" value="Eukaryota"/>
</dbReference>
<dbReference type="InParanoid" id="P79307"/>
<dbReference type="OMA" id="ANWTNEH"/>
<dbReference type="OrthoDB" id="6147836at2759"/>
<dbReference type="Reactome" id="R-SSC-114608">
    <property type="pathway name" value="Platelet degranulation"/>
</dbReference>
<dbReference type="Reactome" id="R-SSC-3000178">
    <property type="pathway name" value="ECM proteoglycans"/>
</dbReference>
<dbReference type="Reactome" id="R-SSC-381426">
    <property type="pathway name" value="Regulation of Insulin-like Growth Factor (IGF) transport and uptake by Insulin-like Growth Factor Binding Proteins (IGFBPs)"/>
</dbReference>
<dbReference type="Reactome" id="R-SSC-416476">
    <property type="pathway name" value="G alpha (q) signalling events"/>
</dbReference>
<dbReference type="Reactome" id="R-SSC-432720">
    <property type="pathway name" value="Lysosome Vesicle Biogenesis"/>
</dbReference>
<dbReference type="Reactome" id="R-SSC-445989">
    <property type="pathway name" value="TAK1-dependent IKK and NF-kappa-B activation"/>
</dbReference>
<dbReference type="Reactome" id="R-SSC-879415">
    <property type="pathway name" value="Advanced glycosylation endproduct receptor signaling"/>
</dbReference>
<dbReference type="Reactome" id="R-SSC-8957275">
    <property type="pathway name" value="Post-translational protein phosphorylation"/>
</dbReference>
<dbReference type="Reactome" id="R-SSC-933542">
    <property type="pathway name" value="TRAF6 mediated NF-kB activation"/>
</dbReference>
<dbReference type="Reactome" id="R-SSC-9609523">
    <property type="pathway name" value="Insertion of tail-anchored proteins into the endoplasmic reticulum membrane"/>
</dbReference>
<dbReference type="Reactome" id="R-SSC-9837999">
    <property type="pathway name" value="Mitochondrial protein degradation"/>
</dbReference>
<dbReference type="ChiTaRS" id="APP">
    <property type="organism name" value="pig"/>
</dbReference>
<dbReference type="Proteomes" id="UP000008227">
    <property type="component" value="Unplaced"/>
</dbReference>
<dbReference type="Proteomes" id="UP000314985">
    <property type="component" value="Chromosome 13"/>
</dbReference>
<dbReference type="Proteomes" id="UP000694570">
    <property type="component" value="Unplaced"/>
</dbReference>
<dbReference type="Proteomes" id="UP000694571">
    <property type="component" value="Unplaced"/>
</dbReference>
<dbReference type="Proteomes" id="UP000694720">
    <property type="component" value="Unplaced"/>
</dbReference>
<dbReference type="Proteomes" id="UP000694722">
    <property type="component" value="Unplaced"/>
</dbReference>
<dbReference type="Proteomes" id="UP000694723">
    <property type="component" value="Unplaced"/>
</dbReference>
<dbReference type="Proteomes" id="UP000694724">
    <property type="component" value="Unplaced"/>
</dbReference>
<dbReference type="Proteomes" id="UP000694725">
    <property type="component" value="Unplaced"/>
</dbReference>
<dbReference type="Proteomes" id="UP000694726">
    <property type="component" value="Unplaced"/>
</dbReference>
<dbReference type="Proteomes" id="UP000694727">
    <property type="component" value="Unplaced"/>
</dbReference>
<dbReference type="Proteomes" id="UP000694728">
    <property type="component" value="Unplaced"/>
</dbReference>
<dbReference type="GO" id="GO:0030424">
    <property type="term" value="C:axon"/>
    <property type="evidence" value="ECO:0000250"/>
    <property type="project" value="UniProtKB"/>
</dbReference>
<dbReference type="GO" id="GO:0009986">
    <property type="term" value="C:cell surface"/>
    <property type="evidence" value="ECO:0000318"/>
    <property type="project" value="GO_Central"/>
</dbReference>
<dbReference type="GO" id="GO:0005905">
    <property type="term" value="C:clathrin-coated pit"/>
    <property type="evidence" value="ECO:0007669"/>
    <property type="project" value="UniProtKB-SubCell"/>
</dbReference>
<dbReference type="GO" id="GO:0005737">
    <property type="term" value="C:cytoplasm"/>
    <property type="evidence" value="ECO:0000250"/>
    <property type="project" value="UniProtKB"/>
</dbReference>
<dbReference type="GO" id="GO:0005769">
    <property type="term" value="C:early endosome"/>
    <property type="evidence" value="ECO:0000250"/>
    <property type="project" value="UniProtKB"/>
</dbReference>
<dbReference type="GO" id="GO:0005783">
    <property type="term" value="C:endoplasmic reticulum"/>
    <property type="evidence" value="ECO:0000250"/>
    <property type="project" value="UniProtKB"/>
</dbReference>
<dbReference type="GO" id="GO:0005576">
    <property type="term" value="C:extracellular region"/>
    <property type="evidence" value="ECO:0007669"/>
    <property type="project" value="UniProtKB-SubCell"/>
</dbReference>
<dbReference type="GO" id="GO:0005794">
    <property type="term" value="C:Golgi apparatus"/>
    <property type="evidence" value="ECO:0000250"/>
    <property type="project" value="UniProtKB"/>
</dbReference>
<dbReference type="GO" id="GO:0005798">
    <property type="term" value="C:Golgi-associated vesicle"/>
    <property type="evidence" value="ECO:0000250"/>
    <property type="project" value="UniProtKB"/>
</dbReference>
<dbReference type="GO" id="GO:0030426">
    <property type="term" value="C:growth cone"/>
    <property type="evidence" value="ECO:0007669"/>
    <property type="project" value="UniProtKB-SubCell"/>
</dbReference>
<dbReference type="GO" id="GO:0016020">
    <property type="term" value="C:membrane"/>
    <property type="evidence" value="ECO:0000250"/>
    <property type="project" value="UniProtKB"/>
</dbReference>
<dbReference type="GO" id="GO:0045121">
    <property type="term" value="C:membrane raft"/>
    <property type="evidence" value="ECO:0000318"/>
    <property type="project" value="GO_Central"/>
</dbReference>
<dbReference type="GO" id="GO:0005634">
    <property type="term" value="C:nucleus"/>
    <property type="evidence" value="ECO:0007669"/>
    <property type="project" value="UniProtKB-SubCell"/>
</dbReference>
<dbReference type="GO" id="GO:0043204">
    <property type="term" value="C:perikaryon"/>
    <property type="evidence" value="ECO:0007669"/>
    <property type="project" value="UniProtKB-SubCell"/>
</dbReference>
<dbReference type="GO" id="GO:0005886">
    <property type="term" value="C:plasma membrane"/>
    <property type="evidence" value="ECO:0000318"/>
    <property type="project" value="GO_Central"/>
</dbReference>
<dbReference type="GO" id="GO:0055037">
    <property type="term" value="C:recycling endosome"/>
    <property type="evidence" value="ECO:0000250"/>
    <property type="project" value="UniProtKB"/>
</dbReference>
<dbReference type="GO" id="GO:0003677">
    <property type="term" value="F:DNA binding"/>
    <property type="evidence" value="ECO:0000250"/>
    <property type="project" value="UniProtKB"/>
</dbReference>
<dbReference type="GO" id="GO:0008201">
    <property type="term" value="F:heparin binding"/>
    <property type="evidence" value="ECO:0007669"/>
    <property type="project" value="UniProtKB-KW"/>
</dbReference>
<dbReference type="GO" id="GO:0004867">
    <property type="term" value="F:serine-type endopeptidase inhibitor activity"/>
    <property type="evidence" value="ECO:0007669"/>
    <property type="project" value="UniProtKB-KW"/>
</dbReference>
<dbReference type="GO" id="GO:0030546">
    <property type="term" value="F:signaling receptor activator activity"/>
    <property type="evidence" value="ECO:0000318"/>
    <property type="project" value="GO_Central"/>
</dbReference>
<dbReference type="GO" id="GO:0005102">
    <property type="term" value="F:signaling receptor binding"/>
    <property type="evidence" value="ECO:0000318"/>
    <property type="project" value="GO_Central"/>
</dbReference>
<dbReference type="GO" id="GO:0046914">
    <property type="term" value="F:transition metal ion binding"/>
    <property type="evidence" value="ECO:0007669"/>
    <property type="project" value="InterPro"/>
</dbReference>
<dbReference type="GO" id="GO:0008344">
    <property type="term" value="P:adult locomotory behavior"/>
    <property type="evidence" value="ECO:0000250"/>
    <property type="project" value="UniProtKB"/>
</dbReference>
<dbReference type="GO" id="GO:0006915">
    <property type="term" value="P:apoptotic process"/>
    <property type="evidence" value="ECO:0007669"/>
    <property type="project" value="UniProtKB-KW"/>
</dbReference>
<dbReference type="GO" id="GO:0008088">
    <property type="term" value="P:axo-dendritic transport"/>
    <property type="evidence" value="ECO:0000250"/>
    <property type="project" value="UniProtKB"/>
</dbReference>
<dbReference type="GO" id="GO:0016199">
    <property type="term" value="P:axon midline choice point recognition"/>
    <property type="evidence" value="ECO:0000250"/>
    <property type="project" value="UniProtKB"/>
</dbReference>
<dbReference type="GO" id="GO:0007409">
    <property type="term" value="P:axonogenesis"/>
    <property type="evidence" value="ECO:0000250"/>
    <property type="project" value="UniProtKB"/>
</dbReference>
<dbReference type="GO" id="GO:0007155">
    <property type="term" value="P:cell adhesion"/>
    <property type="evidence" value="ECO:0007669"/>
    <property type="project" value="UniProtKB-KW"/>
</dbReference>
<dbReference type="GO" id="GO:0007417">
    <property type="term" value="P:central nervous system development"/>
    <property type="evidence" value="ECO:0000318"/>
    <property type="project" value="GO_Central"/>
</dbReference>
<dbReference type="GO" id="GO:0050890">
    <property type="term" value="P:cognition"/>
    <property type="evidence" value="ECO:0000250"/>
    <property type="project" value="UniProtKB"/>
</dbReference>
<dbReference type="GO" id="GO:0048669">
    <property type="term" value="P:collateral sprouting in absence of injury"/>
    <property type="evidence" value="ECO:0000250"/>
    <property type="project" value="UniProtKB"/>
</dbReference>
<dbReference type="GO" id="GO:0016358">
    <property type="term" value="P:dendrite development"/>
    <property type="evidence" value="ECO:0000250"/>
    <property type="project" value="UniProtKB"/>
</dbReference>
<dbReference type="GO" id="GO:0006897">
    <property type="term" value="P:endocytosis"/>
    <property type="evidence" value="ECO:0000250"/>
    <property type="project" value="UniProtKB"/>
</dbReference>
<dbReference type="GO" id="GO:0030198">
    <property type="term" value="P:extracellular matrix organization"/>
    <property type="evidence" value="ECO:0000250"/>
    <property type="project" value="UniProtKB"/>
</dbReference>
<dbReference type="GO" id="GO:0006878">
    <property type="term" value="P:intracellular copper ion homeostasis"/>
    <property type="evidence" value="ECO:0000250"/>
    <property type="project" value="UniProtKB"/>
</dbReference>
<dbReference type="GO" id="GO:0035235">
    <property type="term" value="P:ionotropic glutamate receptor signaling pathway"/>
    <property type="evidence" value="ECO:0000250"/>
    <property type="project" value="UniProtKB"/>
</dbReference>
<dbReference type="GO" id="GO:0007626">
    <property type="term" value="P:locomotory behavior"/>
    <property type="evidence" value="ECO:0000250"/>
    <property type="project" value="UniProtKB"/>
</dbReference>
<dbReference type="GO" id="GO:0007617">
    <property type="term" value="P:mating behavior"/>
    <property type="evidence" value="ECO:0000250"/>
    <property type="project" value="UniProtKB"/>
</dbReference>
<dbReference type="GO" id="GO:0031175">
    <property type="term" value="P:neuron projection development"/>
    <property type="evidence" value="ECO:0000250"/>
    <property type="project" value="UniProtKB"/>
</dbReference>
<dbReference type="GO" id="GO:0016322">
    <property type="term" value="P:neuron remodeling"/>
    <property type="evidence" value="ECO:0000250"/>
    <property type="project" value="UniProtKB"/>
</dbReference>
<dbReference type="GO" id="GO:0007219">
    <property type="term" value="P:Notch signaling pathway"/>
    <property type="evidence" value="ECO:0007669"/>
    <property type="project" value="UniProtKB-KW"/>
</dbReference>
<dbReference type="GO" id="GO:0045931">
    <property type="term" value="P:positive regulation of mitotic cell cycle"/>
    <property type="evidence" value="ECO:0000250"/>
    <property type="project" value="UniProtKB"/>
</dbReference>
<dbReference type="GO" id="GO:0040014">
    <property type="term" value="P:regulation of multicellular organism growth"/>
    <property type="evidence" value="ECO:0000250"/>
    <property type="project" value="UniProtKB"/>
</dbReference>
<dbReference type="GO" id="GO:0050803">
    <property type="term" value="P:regulation of synapse structure or activity"/>
    <property type="evidence" value="ECO:0000250"/>
    <property type="project" value="UniProtKB"/>
</dbReference>
<dbReference type="GO" id="GO:0006417">
    <property type="term" value="P:regulation of translation"/>
    <property type="evidence" value="ECO:0000250"/>
    <property type="project" value="UniProtKB"/>
</dbReference>
<dbReference type="GO" id="GO:0008542">
    <property type="term" value="P:visual learning"/>
    <property type="evidence" value="ECO:0000250"/>
    <property type="project" value="UniProtKB"/>
</dbReference>
<dbReference type="CDD" id="cd22607">
    <property type="entry name" value="Kunitz_ABPP-like"/>
    <property type="match status" value="1"/>
</dbReference>
<dbReference type="FunFam" id="3.30.1490.140:FF:000001">
    <property type="entry name" value="Amyloid beta (A4) protein b"/>
    <property type="match status" value="1"/>
</dbReference>
<dbReference type="FunFam" id="3.90.570.10:FF:000001">
    <property type="entry name" value="Amyloid beta A4 protein"/>
    <property type="match status" value="1"/>
</dbReference>
<dbReference type="FunFam" id="4.10.230.10:FF:000001">
    <property type="entry name" value="Amyloid beta A4 protein"/>
    <property type="match status" value="1"/>
</dbReference>
<dbReference type="FunFam" id="4.10.410.10:FF:000001">
    <property type="entry name" value="Amyloid beta A4 protein"/>
    <property type="match status" value="1"/>
</dbReference>
<dbReference type="FunFam" id="1.20.120.770:FF:000001">
    <property type="entry name" value="Amyloid beta A4 protein-like isoform 1"/>
    <property type="match status" value="1"/>
</dbReference>
<dbReference type="Gene3D" id="1.20.120.770">
    <property type="entry name" value="Amyloid precursor protein, E2 domain"/>
    <property type="match status" value="1"/>
</dbReference>
<dbReference type="Gene3D" id="4.10.230.10">
    <property type="entry name" value="Amyloidogenic glycoprotein, amyloid-beta peptide"/>
    <property type="match status" value="1"/>
</dbReference>
<dbReference type="Gene3D" id="3.30.1490.140">
    <property type="entry name" value="Amyloidogenic glycoprotein, copper-binding domain"/>
    <property type="match status" value="1"/>
</dbReference>
<dbReference type="Gene3D" id="3.90.570.10">
    <property type="entry name" value="Amyloidogenic glycoprotein, heparin-binding domain"/>
    <property type="match status" value="1"/>
</dbReference>
<dbReference type="Gene3D" id="4.10.410.10">
    <property type="entry name" value="Pancreatic trypsin inhibitor Kunitz domain"/>
    <property type="match status" value="1"/>
</dbReference>
<dbReference type="Gene3D" id="2.30.29.30">
    <property type="entry name" value="Pleckstrin-homology domain (PH domain)/Phosphotyrosine-binding domain (PTB)"/>
    <property type="match status" value="1"/>
</dbReference>
<dbReference type="InterPro" id="IPR036669">
    <property type="entry name" value="Amyloid_Cu-bd_sf"/>
</dbReference>
<dbReference type="InterPro" id="IPR008155">
    <property type="entry name" value="Amyloid_glyco"/>
</dbReference>
<dbReference type="InterPro" id="IPR013803">
    <property type="entry name" value="Amyloid_glyco_Abeta"/>
</dbReference>
<dbReference type="InterPro" id="IPR037071">
    <property type="entry name" value="Amyloid_glyco_Abeta_sf"/>
</dbReference>
<dbReference type="InterPro" id="IPR011178">
    <property type="entry name" value="Amyloid_glyco_Cu-bd"/>
</dbReference>
<dbReference type="InterPro" id="IPR024329">
    <property type="entry name" value="Amyloid_glyco_E2_domain"/>
</dbReference>
<dbReference type="InterPro" id="IPR008154">
    <property type="entry name" value="Amyloid_glyco_extra"/>
</dbReference>
<dbReference type="InterPro" id="IPR015849">
    <property type="entry name" value="Amyloid_glyco_heparin-bd"/>
</dbReference>
<dbReference type="InterPro" id="IPR036454">
    <property type="entry name" value="Amyloid_glyco_heparin-bd_sf"/>
</dbReference>
<dbReference type="InterPro" id="IPR019745">
    <property type="entry name" value="Amyloid_glyco_intracell_CS"/>
</dbReference>
<dbReference type="InterPro" id="IPR019543">
    <property type="entry name" value="APP_amyloid_C"/>
</dbReference>
<dbReference type="InterPro" id="IPR019744">
    <property type="entry name" value="APP_CUBD_CS"/>
</dbReference>
<dbReference type="InterPro" id="IPR036176">
    <property type="entry name" value="E2_sf"/>
</dbReference>
<dbReference type="InterPro" id="IPR002223">
    <property type="entry name" value="Kunitz_BPTI"/>
</dbReference>
<dbReference type="InterPro" id="IPR036880">
    <property type="entry name" value="Kunitz_BPTI_sf"/>
</dbReference>
<dbReference type="InterPro" id="IPR011993">
    <property type="entry name" value="PH-like_dom_sf"/>
</dbReference>
<dbReference type="InterPro" id="IPR020901">
    <property type="entry name" value="Prtase_inh_Kunz-CS"/>
</dbReference>
<dbReference type="PANTHER" id="PTHR23103">
    <property type="entry name" value="ALZHEIMER'S DISEASE BETA-AMYLOID RELATED"/>
    <property type="match status" value="1"/>
</dbReference>
<dbReference type="PANTHER" id="PTHR23103:SF7">
    <property type="entry name" value="AMYLOID-BETA PRECURSOR PROTEIN"/>
    <property type="match status" value="1"/>
</dbReference>
<dbReference type="Pfam" id="PF10515">
    <property type="entry name" value="APP_amyloid"/>
    <property type="match status" value="1"/>
</dbReference>
<dbReference type="Pfam" id="PF12924">
    <property type="entry name" value="APP_Cu_bd"/>
    <property type="match status" value="1"/>
</dbReference>
<dbReference type="Pfam" id="PF12925">
    <property type="entry name" value="APP_E2"/>
    <property type="match status" value="1"/>
</dbReference>
<dbReference type="Pfam" id="PF02177">
    <property type="entry name" value="APP_N"/>
    <property type="match status" value="1"/>
</dbReference>
<dbReference type="Pfam" id="PF03494">
    <property type="entry name" value="Beta-APP"/>
    <property type="match status" value="1"/>
</dbReference>
<dbReference type="Pfam" id="PF00014">
    <property type="entry name" value="Kunitz_BPTI"/>
    <property type="match status" value="1"/>
</dbReference>
<dbReference type="PRINTS" id="PR00203">
    <property type="entry name" value="AMYLOIDA4"/>
</dbReference>
<dbReference type="PRINTS" id="PR00759">
    <property type="entry name" value="BASICPTASE"/>
</dbReference>
<dbReference type="PRINTS" id="PR00204">
    <property type="entry name" value="BETAAMYLOID"/>
</dbReference>
<dbReference type="SMART" id="SM00006">
    <property type="entry name" value="A4_EXTRA"/>
    <property type="match status" value="1"/>
</dbReference>
<dbReference type="SMART" id="SM00131">
    <property type="entry name" value="KU"/>
    <property type="match status" value="1"/>
</dbReference>
<dbReference type="SUPFAM" id="SSF56491">
    <property type="entry name" value="A heparin-binding domain"/>
    <property type="match status" value="1"/>
</dbReference>
<dbReference type="SUPFAM" id="SSF89811">
    <property type="entry name" value="Amyloid beta a4 protein copper binding domain (domain 2)"/>
    <property type="match status" value="1"/>
</dbReference>
<dbReference type="SUPFAM" id="SSF57362">
    <property type="entry name" value="BPTI-like"/>
    <property type="match status" value="1"/>
</dbReference>
<dbReference type="SUPFAM" id="SSF109843">
    <property type="entry name" value="CAPPD, an extracellular domain of amyloid beta A4 protein"/>
    <property type="match status" value="1"/>
</dbReference>
<dbReference type="PROSITE" id="PS00319">
    <property type="entry name" value="APP_CUBD"/>
    <property type="match status" value="1"/>
</dbReference>
<dbReference type="PROSITE" id="PS51869">
    <property type="entry name" value="APP_E1"/>
    <property type="match status" value="1"/>
</dbReference>
<dbReference type="PROSITE" id="PS51870">
    <property type="entry name" value="APP_E2"/>
    <property type="match status" value="1"/>
</dbReference>
<dbReference type="PROSITE" id="PS00320">
    <property type="entry name" value="APP_INTRA"/>
    <property type="match status" value="1"/>
</dbReference>
<dbReference type="PROSITE" id="PS00280">
    <property type="entry name" value="BPTI_KUNITZ_1"/>
    <property type="match status" value="1"/>
</dbReference>
<dbReference type="PROSITE" id="PS50279">
    <property type="entry name" value="BPTI_KUNITZ_2"/>
    <property type="match status" value="1"/>
</dbReference>
<name>A4_PIG</name>
<reference key="1">
    <citation type="submission" date="1999-09" db="EMBL/GenBank/DDBJ databases">
        <title>Amyloid precursor protein 770.</title>
        <authorList>
            <person name="Kimura A."/>
            <person name="Takahashi T."/>
        </authorList>
    </citation>
    <scope>NUCLEOTIDE SEQUENCE [MRNA]</scope>
</reference>
<reference key="2">
    <citation type="submission" date="1997-01" db="EMBL/GenBank/DDBJ databases">
        <title>Evaluation and characterization of a porcine small intestine cDNA library.</title>
        <authorList>
            <person name="Winteroe A.K."/>
            <person name="Fredholm M."/>
        </authorList>
    </citation>
    <scope>NUCLEOTIDE SEQUENCE [LARGE SCALE MRNA] OF 1-136</scope>
    <source>
        <tissue>Small intestine</tissue>
    </source>
</reference>
<reference key="3">
    <citation type="journal article" date="1991" name="Brain Res. Mol. Brain Res.">
        <title>Conservation of the sequence of the Alzheimer's disease amyloid peptide in dog, polar bear and five other mammals by cross-species polymerase chain reaction analysis.</title>
        <authorList>
            <person name="Johnstone E.M."/>
            <person name="Chaney M.O."/>
            <person name="Norris F.H."/>
            <person name="Pascual R."/>
            <person name="Little S.P."/>
        </authorList>
    </citation>
    <scope>NUCLEOTIDE SEQUENCE [MRNA] OF 667-723</scope>
    <source>
        <tissue>Brain</tissue>
    </source>
</reference>
<feature type="signal peptide" evidence="2">
    <location>
        <begin position="1"/>
        <end position="17"/>
    </location>
</feature>
<feature type="chain" id="PRO_0000000140" description="Amyloid-beta precursor protein">
    <location>
        <begin position="18"/>
        <end position="770"/>
    </location>
</feature>
<feature type="chain" id="PRO_0000000141" description="Soluble APP-alpha" evidence="5">
    <location>
        <begin position="18"/>
        <end position="687"/>
    </location>
</feature>
<feature type="chain" id="PRO_0000000142" description="Soluble APP-beta" evidence="5">
    <location>
        <begin position="18"/>
        <end position="671"/>
    </location>
</feature>
<feature type="chain" id="PRO_0000381970" description="N-APP" evidence="1">
    <location>
        <begin position="18"/>
        <end position="286"/>
    </location>
</feature>
<feature type="chain" id="PRO_0000000143" description="C99" evidence="1">
    <location>
        <begin position="672"/>
        <end position="770"/>
    </location>
</feature>
<feature type="chain" id="PRO_0000000144" description="Amyloid-beta protein 42" evidence="2">
    <location>
        <begin position="672"/>
        <end position="713"/>
    </location>
</feature>
<feature type="chain" id="PRO_0000000145" description="Amyloid-beta protein 40" evidence="2">
    <location>
        <begin position="672"/>
        <end position="711"/>
    </location>
</feature>
<feature type="chain" id="PRO_0000000146" description="C83" evidence="1">
    <location>
        <begin position="688"/>
        <end position="770"/>
    </location>
</feature>
<feature type="peptide" id="PRO_0000000147" description="P3(42)" evidence="1">
    <location>
        <begin position="688"/>
        <end position="713"/>
    </location>
</feature>
<feature type="peptide" id="PRO_0000000148" description="P3(40)" evidence="1">
    <location>
        <begin position="688"/>
        <end position="711"/>
    </location>
</feature>
<feature type="chain" id="PRO_0000384578" description="C80">
    <location>
        <begin position="691"/>
        <end position="770"/>
    </location>
</feature>
<feature type="chain" id="PRO_0000000149" description="Gamma-secretase C-terminal fragment 59">
    <location>
        <begin position="712"/>
        <end position="770"/>
    </location>
</feature>
<feature type="chain" id="PRO_0000000150" description="Gamma-secretase C-terminal fragment 57">
    <location>
        <begin position="714"/>
        <end position="770"/>
    </location>
</feature>
<feature type="chain" id="PRO_0000000151" description="Gamma-secretase C-terminal fragment 50" evidence="1">
    <location>
        <begin position="721"/>
        <end position="770"/>
    </location>
</feature>
<feature type="chain" id="PRO_0000000152" description="C31" evidence="1">
    <location>
        <begin position="740"/>
        <end position="770"/>
    </location>
</feature>
<feature type="topological domain" description="Extracellular" evidence="10">
    <location>
        <begin position="18"/>
        <end position="701"/>
    </location>
</feature>
<feature type="transmembrane region" description="Helical" evidence="2">
    <location>
        <begin position="702"/>
        <end position="722"/>
    </location>
</feature>
<feature type="topological domain" description="Cytoplasmic" evidence="10">
    <location>
        <begin position="723"/>
        <end position="770"/>
    </location>
</feature>
<feature type="domain" description="E1" evidence="7">
    <location>
        <begin position="28"/>
        <end position="189"/>
    </location>
</feature>
<feature type="domain" description="BPTI/Kunitz inhibitor" evidence="6">
    <location>
        <begin position="291"/>
        <end position="341"/>
    </location>
</feature>
<feature type="domain" description="E2" evidence="8">
    <location>
        <begin position="374"/>
        <end position="565"/>
    </location>
</feature>
<feature type="region of interest" description="GFLD subdomain" evidence="7">
    <location>
        <begin position="28"/>
        <end position="123"/>
    </location>
</feature>
<feature type="region of interest" description="CuBD subdomain" evidence="7">
    <location>
        <begin position="131"/>
        <end position="189"/>
    </location>
</feature>
<feature type="region of interest" description="Copper-binding" evidence="1">
    <location>
        <begin position="135"/>
        <end position="155"/>
    </location>
</feature>
<feature type="region of interest" description="Zinc-binding" evidence="1">
    <location>
        <begin position="181"/>
        <end position="188"/>
    </location>
</feature>
<feature type="region of interest" description="Disordered" evidence="9">
    <location>
        <begin position="196"/>
        <end position="284"/>
    </location>
</feature>
<feature type="region of interest" description="Heparin-binding" evidence="1">
    <location>
        <begin position="391"/>
        <end position="423"/>
    </location>
</feature>
<feature type="region of interest" description="Heparin-binding" evidence="1">
    <location>
        <begin position="491"/>
        <end position="522"/>
    </location>
</feature>
<feature type="region of interest" description="Collagen-binding" evidence="2">
    <location>
        <begin position="523"/>
        <end position="540"/>
    </location>
</feature>
<feature type="region of interest" description="Interaction with PSEN1" evidence="2">
    <location>
        <begin position="695"/>
        <end position="722"/>
    </location>
</feature>
<feature type="region of interest" description="Interaction with G(o)-alpha" evidence="1">
    <location>
        <begin position="732"/>
        <end position="751"/>
    </location>
</feature>
<feature type="region of interest" description="Required for the interaction with KIF5B and for anterograde transport in axons" evidence="2">
    <location>
        <begin position="756"/>
        <end position="770"/>
    </location>
</feature>
<feature type="short sequence motif" description="OX-2" evidence="2">
    <location>
        <begin position="344"/>
        <end position="365"/>
    </location>
</feature>
<feature type="short sequence motif" description="Basolateral sorting signal">
    <location>
        <begin position="724"/>
        <end position="734"/>
    </location>
</feature>
<feature type="short sequence motif" description="YENPXY motif; contains endocytosis signal" evidence="2">
    <location>
        <begin position="757"/>
        <end position="762"/>
    </location>
</feature>
<feature type="compositionally biased region" description="Acidic residues" evidence="9">
    <location>
        <begin position="196"/>
        <end position="207"/>
    </location>
</feature>
<feature type="compositionally biased region" description="Acidic residues" evidence="9">
    <location>
        <begin position="228"/>
        <end position="264"/>
    </location>
</feature>
<feature type="compositionally biased region" description="Low complexity" evidence="9">
    <location>
        <begin position="268"/>
        <end position="281"/>
    </location>
</feature>
<feature type="binding site" evidence="2">
    <location>
        <begin position="96"/>
        <end position="110"/>
    </location>
    <ligand>
        <name>heparin</name>
        <dbReference type="ChEBI" id="CHEBI:28304"/>
    </ligand>
</feature>
<feature type="binding site" evidence="7">
    <location>
        <position position="147"/>
    </location>
    <ligand>
        <name>Cu(2+)</name>
        <dbReference type="ChEBI" id="CHEBI:29036"/>
        <label>1</label>
    </ligand>
</feature>
<feature type="binding site" evidence="7">
    <location>
        <position position="151"/>
    </location>
    <ligand>
        <name>Cu(2+)</name>
        <dbReference type="ChEBI" id="CHEBI:29036"/>
        <label>1</label>
    </ligand>
</feature>
<feature type="binding site" evidence="7">
    <location>
        <position position="168"/>
    </location>
    <ligand>
        <name>Cu(2+)</name>
        <dbReference type="ChEBI" id="CHEBI:29036"/>
        <label>1</label>
    </ligand>
</feature>
<feature type="binding site" evidence="2">
    <location>
        <position position="183"/>
    </location>
    <ligand>
        <name>Zn(2+)</name>
        <dbReference type="ChEBI" id="CHEBI:29105"/>
        <label>1</label>
    </ligand>
</feature>
<feature type="binding site" evidence="2">
    <location>
        <position position="186"/>
    </location>
    <ligand>
        <name>Zn(2+)</name>
        <dbReference type="ChEBI" id="CHEBI:29105"/>
        <label>1</label>
    </ligand>
</feature>
<feature type="binding site" evidence="2">
    <location>
        <position position="187"/>
    </location>
    <ligand>
        <name>Zn(2+)</name>
        <dbReference type="ChEBI" id="CHEBI:29105"/>
        <label>1</label>
    </ligand>
</feature>
<feature type="binding site" evidence="2">
    <location>
        <position position="677"/>
    </location>
    <ligand>
        <name>Cu(2+)</name>
        <dbReference type="ChEBI" id="CHEBI:29036"/>
        <label>2</label>
    </ligand>
</feature>
<feature type="binding site" evidence="2">
    <location>
        <position position="677"/>
    </location>
    <ligand>
        <name>Zn(2+)</name>
        <dbReference type="ChEBI" id="CHEBI:29105"/>
        <label>2</label>
    </ligand>
</feature>
<feature type="binding site" evidence="2">
    <location>
        <position position="681"/>
    </location>
    <ligand>
        <name>Cu(2+)</name>
        <dbReference type="ChEBI" id="CHEBI:29036"/>
        <label>2</label>
    </ligand>
</feature>
<feature type="binding site" evidence="2">
    <location>
        <position position="681"/>
    </location>
    <ligand>
        <name>Zn(2+)</name>
        <dbReference type="ChEBI" id="CHEBI:29105"/>
        <label>2</label>
    </ligand>
</feature>
<feature type="binding site" evidence="2">
    <location>
        <position position="684"/>
    </location>
    <ligand>
        <name>Cu(2+)</name>
        <dbReference type="ChEBI" id="CHEBI:29036"/>
        <label>2</label>
    </ligand>
</feature>
<feature type="binding site" evidence="2">
    <location>
        <position position="684"/>
    </location>
    <ligand>
        <name>Zn(2+)</name>
        <dbReference type="ChEBI" id="CHEBI:29105"/>
        <label>2</label>
    </ligand>
</feature>
<feature type="binding site" evidence="2">
    <location>
        <position position="685"/>
    </location>
    <ligand>
        <name>Cu(2+)</name>
        <dbReference type="ChEBI" id="CHEBI:29036"/>
        <label>2</label>
    </ligand>
</feature>
<feature type="binding site" evidence="2">
    <location>
        <position position="685"/>
    </location>
    <ligand>
        <name>Zn(2+)</name>
        <dbReference type="ChEBI" id="CHEBI:29105"/>
        <label>2</label>
    </ligand>
</feature>
<feature type="site" description="Required for Cu(2+) reduction" evidence="7">
    <location>
        <position position="170"/>
    </location>
</feature>
<feature type="site" description="Cleavage; by caspases" evidence="2">
    <location>
        <begin position="197"/>
        <end position="198"/>
    </location>
</feature>
<feature type="site" description="Cleavage; by caspases" evidence="2">
    <location>
        <begin position="219"/>
        <end position="220"/>
    </location>
</feature>
<feature type="site" description="Reactive bond" evidence="1">
    <location>
        <begin position="301"/>
        <end position="302"/>
    </location>
</feature>
<feature type="site" description="Cleavage; by beta-secretase" evidence="2">
    <location>
        <begin position="671"/>
        <end position="672"/>
    </location>
</feature>
<feature type="site" description="Cleavage; by ACE" evidence="2">
    <location>
        <begin position="678"/>
        <end position="679"/>
    </location>
</feature>
<feature type="site" description="Cleavage; by alpha-secretase" evidence="3">
    <location>
        <begin position="687"/>
        <end position="688"/>
    </location>
</feature>
<feature type="site" description="Cleavage; by theta-secretase" evidence="3">
    <location>
        <begin position="690"/>
        <end position="691"/>
    </location>
</feature>
<feature type="site" description="Implicated in free radical propagation" evidence="1">
    <location>
        <position position="704"/>
    </location>
</feature>
<feature type="site" description="Susceptible to oxidation" evidence="2">
    <location>
        <position position="706"/>
    </location>
</feature>
<feature type="site" description="Cleavage; by gamma-secretase; site 1" evidence="3">
    <location>
        <begin position="711"/>
        <end position="712"/>
    </location>
</feature>
<feature type="site" description="Cleavage; by gamma-secretase; site 2" evidence="2">
    <location>
        <begin position="713"/>
        <end position="714"/>
    </location>
</feature>
<feature type="site" description="Cleavage; by gamma-secretase; site 3" evidence="2">
    <location>
        <begin position="720"/>
        <end position="721"/>
    </location>
</feature>
<feature type="site" description="Cleavage; by a caspase" evidence="2">
    <location>
        <begin position="739"/>
        <end position="740"/>
    </location>
</feature>
<feature type="modified residue" description="Phosphoserine; by CK2" evidence="2">
    <location>
        <position position="198"/>
    </location>
</feature>
<feature type="modified residue" description="Phosphoserine; by CK1" evidence="2">
    <location>
        <position position="206"/>
    </location>
</feature>
<feature type="modified residue" description="Sulfotyrosine" evidence="5">
    <location>
        <position position="217"/>
    </location>
</feature>
<feature type="modified residue" description="Sulfotyrosine" evidence="5">
    <location>
        <position position="262"/>
    </location>
</feature>
<feature type="modified residue" description="Sulfotyrosine" evidence="5">
    <location>
        <position position="336"/>
    </location>
</feature>
<feature type="modified residue" description="Phosphoserine" evidence="2">
    <location>
        <position position="441"/>
    </location>
</feature>
<feature type="modified residue" description="Phosphotyrosine" evidence="2">
    <location>
        <position position="497"/>
    </location>
</feature>
<feature type="modified residue" description="Phosphothreonine" evidence="3">
    <location>
        <position position="729"/>
    </location>
</feature>
<feature type="modified residue" description="Phosphoserine; by APP-kinase I" evidence="3">
    <location>
        <position position="730"/>
    </location>
</feature>
<feature type="modified residue" description="Phosphothreonine; by CDK5 and MAPK10" evidence="2">
    <location>
        <position position="743"/>
    </location>
</feature>
<feature type="modified residue" description="Phosphotyrosine; by ABL1" evidence="4">
    <location>
        <position position="757"/>
    </location>
</feature>
<feature type="glycosylation site" description="N-linked (GlcNAc...) asparagine" evidence="5">
    <location>
        <position position="542"/>
    </location>
</feature>
<feature type="glycosylation site" description="N-linked (GlcNAc...) asparagine" evidence="5">
    <location>
        <position position="571"/>
    </location>
</feature>
<feature type="disulfide bond" evidence="7">
    <location>
        <begin position="38"/>
        <end position="62"/>
    </location>
</feature>
<feature type="disulfide bond" evidence="7">
    <location>
        <begin position="73"/>
        <end position="117"/>
    </location>
</feature>
<feature type="disulfide bond" evidence="7">
    <location>
        <begin position="98"/>
        <end position="105"/>
    </location>
</feature>
<feature type="disulfide bond" evidence="7">
    <location>
        <begin position="133"/>
        <end position="187"/>
    </location>
</feature>
<feature type="disulfide bond" evidence="7">
    <location>
        <begin position="144"/>
        <end position="174"/>
    </location>
</feature>
<feature type="disulfide bond" evidence="7">
    <location>
        <begin position="158"/>
        <end position="186"/>
    </location>
</feature>
<feature type="disulfide bond" evidence="6">
    <location>
        <begin position="291"/>
        <end position="341"/>
    </location>
</feature>
<feature type="disulfide bond" evidence="6">
    <location>
        <begin position="300"/>
        <end position="324"/>
    </location>
</feature>
<feature type="disulfide bond" evidence="6">
    <location>
        <begin position="316"/>
        <end position="337"/>
    </location>
</feature>
<feature type="cross-link" description="Glycyl lysine isopeptide (Lys-Gly) (interchain with G-Cter in ubiquitin)" evidence="3">
    <location>
        <position position="763"/>
    </location>
</feature>
<feature type="sequence conflict" description="In Ref. 2; CAB06313." evidence="10" ref="2">
    <original>KFL</original>
    <variation>SSY</variation>
    <location>
        <begin position="134"/>
        <end position="136"/>
    </location>
</feature>
<proteinExistence type="evidence at transcript level"/>
<gene>
    <name evidence="2" type="primary">APP</name>
    <name evidence="2" type="synonym">A4</name>
    <name evidence="2" type="synonym">AD1</name>
</gene>
<protein>
    <recommendedName>
        <fullName evidence="2">Amyloid-beta precursor protein</fullName>
    </recommendedName>
    <alternativeName>
        <fullName>ABPP</fullName>
        <shortName>APP</shortName>
    </alternativeName>
    <alternativeName>
        <fullName>Alzheimer disease amyloid A4 protein homolog</fullName>
    </alternativeName>
    <alternativeName>
        <fullName>Alzheimer disease amyloid protein</fullName>
    </alternativeName>
    <alternativeName>
        <fullName evidence="10">Amyloid precursor protein</fullName>
    </alternativeName>
    <alternativeName>
        <fullName evidence="3">Amyloid-beta (A4) precursor protein</fullName>
    </alternativeName>
    <alternativeName>
        <fullName evidence="3">Amyloid-beta A4 protein</fullName>
    </alternativeName>
    <component>
        <recommendedName>
            <fullName>N-APP</fullName>
        </recommendedName>
    </component>
    <component>
        <recommendedName>
            <fullName>Soluble APP-alpha</fullName>
            <shortName>S-APP-alpha</shortName>
        </recommendedName>
    </component>
    <component>
        <recommendedName>
            <fullName>Soluble APP-beta</fullName>
            <shortName>S-APP-beta</shortName>
        </recommendedName>
    </component>
    <component>
        <recommendedName>
            <fullName>C99</fullName>
        </recommendedName>
        <alternativeName>
            <fullName>Beta-secretase C-terminal fragment</fullName>
            <shortName>Beta-CTF</shortName>
        </alternativeName>
    </component>
    <component>
        <recommendedName>
            <fullName>Amyloid-beta protein 42</fullName>
            <shortName>Abeta42</shortName>
        </recommendedName>
        <alternativeName>
            <fullName>Beta-APP42</fullName>
        </alternativeName>
    </component>
    <component>
        <recommendedName>
            <fullName>Amyloid-beta protein 40</fullName>
            <shortName>Abeta40</shortName>
        </recommendedName>
        <alternativeName>
            <fullName>Beta-APP40</fullName>
        </alternativeName>
    </component>
    <component>
        <recommendedName>
            <fullName>C83</fullName>
        </recommendedName>
        <alternativeName>
            <fullName>Alpha-secretase C-terminal fragment</fullName>
            <shortName>Alpha-CTF</shortName>
        </alternativeName>
    </component>
    <component>
        <recommendedName>
            <fullName>P3(42)</fullName>
        </recommendedName>
    </component>
    <component>
        <recommendedName>
            <fullName>P3(40)</fullName>
        </recommendedName>
    </component>
    <component>
        <recommendedName>
            <fullName>C80</fullName>
        </recommendedName>
    </component>
    <component>
        <recommendedName>
            <fullName>Gamma-secretase C-terminal fragment 59</fullName>
        </recommendedName>
        <alternativeName>
            <fullName>Gamma-CTF(59)</fullName>
        </alternativeName>
    </component>
    <component>
        <recommendedName>
            <fullName>Gamma-secretase C-terminal fragment 57</fullName>
        </recommendedName>
        <alternativeName>
            <fullName>Gamma-CTF(57)</fullName>
        </alternativeName>
    </component>
    <component>
        <recommendedName>
            <fullName>Gamma-secretase C-terminal fragment 50</fullName>
        </recommendedName>
        <alternativeName>
            <fullName>Gamma-CTF(50)</fullName>
        </alternativeName>
    </component>
    <component>
        <recommendedName>
            <fullName>C31</fullName>
        </recommendedName>
    </component>
</protein>
<sequence length="770" mass="86961">MLPGLALVLLAAWTARALEVPTDGNAGLLAEPQVAMFCGKLNMHMNVQNGKWESDPSGTKTCIGTKEGILQYCQEVYPELQITNVVEANQPVTIQNWCKRSRKQCKTHTHIVIPYRCLVGEFVSDALLVPDKCKFLHQERMDVCETHLHWHTVAKETCSEKSTNLHDYGMLLPCGIDKFRGVEFVCCPLAEESDNIDSADAEEDDSDVWWGGADTDYADGSEDKVVEVAEEEEVADVEEEEAEDDEDDEDGDEVEEEAEEPYEEATERTTSIATTTTTTTESVEEVVREVCSEQAETGPCRAMISRWYFDVTEGKCAPFFYGGCGGNRNNFDTEEYCMAVCGSVMSQSLLKTTQEHLPQDPVKLPTTAASTPDAVDKYLETPGDENEHAHFQKAKERLEAKHRERMSQVMREWEEAERQAKNLPKADKKAVIQHFQEKVESLEQEAANERQQLVETHMARVEAMLNDRRRLALENYITALQAVPPRPRHVFNMLKKYVRAEQKDRQHTLKHFEHVRMVDPKKAAQIRSQVMTHLRVIYERMNQSLSLLYNVPAVAEEIQDEVDELLQKEQNYSDDVLANMISEPRISYGNDALMPSLTETKTTVELLPVNGEFSLDDLQPWHPFGVDSVPANTENEVEPVDARPAADRGLTTRPGSGLTNIKTEEISEVKMDAEFRHDSGYEVHHQKLVFFAEDVGSNKGAIIGLMVGGVVIATVIVITLVMLKKKQYTSIHHGVVEVDAAVTPEERHLSKMQQNGYENPTYKFFEQMQN</sequence>
<accession>P79307</accession>
<accession>Q29023</accession>
<accession>Q9TUI0</accession>
<organism>
    <name type="scientific">Sus scrofa</name>
    <name type="common">Pig</name>
    <dbReference type="NCBI Taxonomy" id="9823"/>
    <lineage>
        <taxon>Eukaryota</taxon>
        <taxon>Metazoa</taxon>
        <taxon>Chordata</taxon>
        <taxon>Craniata</taxon>
        <taxon>Vertebrata</taxon>
        <taxon>Euteleostomi</taxon>
        <taxon>Mammalia</taxon>
        <taxon>Eutheria</taxon>
        <taxon>Laurasiatheria</taxon>
        <taxon>Artiodactyla</taxon>
        <taxon>Suina</taxon>
        <taxon>Suidae</taxon>
        <taxon>Sus</taxon>
    </lineage>
</organism>
<evidence type="ECO:0000250" key="1"/>
<evidence type="ECO:0000250" key="2">
    <source>
        <dbReference type="UniProtKB" id="P05067"/>
    </source>
</evidence>
<evidence type="ECO:0000250" key="3">
    <source>
        <dbReference type="UniProtKB" id="P08592"/>
    </source>
</evidence>
<evidence type="ECO:0000250" key="4">
    <source>
        <dbReference type="UniProtKB" id="P12023"/>
    </source>
</evidence>
<evidence type="ECO:0000255" key="5"/>
<evidence type="ECO:0000255" key="6">
    <source>
        <dbReference type="PROSITE-ProRule" id="PRU00031"/>
    </source>
</evidence>
<evidence type="ECO:0000255" key="7">
    <source>
        <dbReference type="PROSITE-ProRule" id="PRU01217"/>
    </source>
</evidence>
<evidence type="ECO:0000255" key="8">
    <source>
        <dbReference type="PROSITE-ProRule" id="PRU01218"/>
    </source>
</evidence>
<evidence type="ECO:0000256" key="9">
    <source>
        <dbReference type="SAM" id="MobiDB-lite"/>
    </source>
</evidence>
<evidence type="ECO:0000305" key="10"/>